<evidence type="ECO:0000250" key="1">
    <source>
        <dbReference type="UniProtKB" id="Q04760"/>
    </source>
</evidence>
<evidence type="ECO:0000255" key="2">
    <source>
        <dbReference type="PROSITE-ProRule" id="PRU01163"/>
    </source>
</evidence>
<evidence type="ECO:0000269" key="3">
    <source>
    </source>
</evidence>
<evidence type="ECO:0000269" key="4">
    <source>
    </source>
</evidence>
<evidence type="ECO:0000269" key="5">
    <source>
    </source>
</evidence>
<evidence type="ECO:0000269" key="6">
    <source>
    </source>
</evidence>
<evidence type="ECO:0000269" key="7">
    <source>
    </source>
</evidence>
<evidence type="ECO:0000269" key="8">
    <source>
    </source>
</evidence>
<evidence type="ECO:0000269" key="9">
    <source>
    </source>
</evidence>
<evidence type="ECO:0000303" key="10">
    <source>
    </source>
</evidence>
<evidence type="ECO:0000303" key="11">
    <source>
    </source>
</evidence>
<evidence type="ECO:0000305" key="12"/>
<evidence type="ECO:0000305" key="13">
    <source>
    </source>
</evidence>
<comment type="function">
    <text evidence="1 9">Catalyzes the conversion of hemimercaptal, formed from methylglyoxal and glutathione, to S-lactoylglutathione (By similarity). Involved in the detoxifiation of methylglyoxal. Can functionally complement growth defect of a yeast mutant lacking GLY I. Involved in abiotic stress response. Over-expression of GLYI-11 in tobacco increases tolerance to osmotic, oxidative and salt stresses (PubMed:24661284).</text>
</comment>
<comment type="catalytic activity">
    <reaction evidence="3">
        <text>(R)-S-lactoylglutathione = methylglyoxal + glutathione</text>
        <dbReference type="Rhea" id="RHEA:19069"/>
        <dbReference type="ChEBI" id="CHEBI:17158"/>
        <dbReference type="ChEBI" id="CHEBI:57474"/>
        <dbReference type="ChEBI" id="CHEBI:57925"/>
        <dbReference type="EC" id="4.4.1.5"/>
    </reaction>
</comment>
<comment type="cofactor">
    <cofactor evidence="9">
        <name>Ni(2+)</name>
        <dbReference type="ChEBI" id="CHEBI:49786"/>
    </cofactor>
    <text evidence="9">Binds 1 nickel ion per subunit.</text>
</comment>
<comment type="biophysicochemical properties">
    <kinetics>
        <KM evidence="3">7.6 mM for methylglyoxal</KM>
        <KM evidence="9">99.8 uM for glutatione</KM>
        <Vmax evidence="9">130.8 umol/min/mg enzyme with glutatione as substrate</Vmax>
    </kinetics>
    <phDependence>
        <text evidence="9">Optimum pH is 7.2.</text>
    </phDependence>
</comment>
<comment type="pathway">
    <text evidence="12">Secondary metabolite metabolism; methylglyoxal degradation; (R)-lactate from methylglyoxal: step 1/2.</text>
</comment>
<comment type="subunit">
    <text evidence="9">Monomer.</text>
</comment>
<comment type="tissue specificity">
    <text evidence="3 4">Expressed in callus, stem, leaves, panicles and maturing seeds (at protein level).</text>
</comment>
<comment type="induction">
    <text evidence="6 9">By salt stress and hydrogen peroxide (PubMed:21213008). Induced by methylglyoxal (PubMed:24661284).</text>
</comment>
<comment type="PTM">
    <text evidence="5">Phosphorylated after gibberellin treatment.</text>
</comment>
<comment type="allergen">
    <text evidence="3 7 8">Causes an allergic reaction in human. Binds to IgE.</text>
</comment>
<comment type="miscellaneous">
    <text evidence="9">Plants over-expressing GLYI-11 display increased tolerance to osmotic, oxidative and salt stresses.</text>
</comment>
<comment type="similarity">
    <text evidence="12">Belongs to the glyoxalase I family.</text>
</comment>
<sequence>MASGSEAEKSPEVVLEWPKKDKKRLLHAVYRVGDLDRTIKCYTECFGMKLLRKRDVPEEKYTNAFLGFGPEDTNFALELTYNYGVDKYDIGAGFGHFAIATEDVYKLAEKIKSSCCCKITREPGPVKGGSTVIAFAQDPDGYMFELIQRGPTPEPLCQVMLRVGDLDRSIKFYEKALGMKLLRKKDVPDYKYTIAMLGYADEDKTTVIELTYNYGVTEYTKGNAYAQVAIGTEDVYKSAEAVELVTKELGGKILRQPGPLPGLNTKIASFLDPDGWKVVLVDNADFLKELQ</sequence>
<gene>
    <name evidence="11" type="primary">GLYI-11</name>
    <name type="synonym">GLX-I</name>
    <name type="ordered locus">Os08g0191700</name>
    <name type="ordered locus">LOC_Os08g09250</name>
    <name type="ORF">OSJNBa0056O06.9-1</name>
</gene>
<name>LGUL_ORYSJ</name>
<dbReference type="EC" id="4.4.1.5" evidence="3"/>
<dbReference type="EMBL" id="AB017042">
    <property type="protein sequence ID" value="BAA36759.1"/>
    <property type="molecule type" value="mRNA"/>
</dbReference>
<dbReference type="EMBL" id="EF122487">
    <property type="protein sequence ID" value="ABL74574.1"/>
    <property type="molecule type" value="mRNA"/>
</dbReference>
<dbReference type="EMBL" id="GQ848063">
    <property type="protein sequence ID" value="ADM86876.1"/>
    <property type="molecule type" value="mRNA"/>
</dbReference>
<dbReference type="EMBL" id="AB050986">
    <property type="protein sequence ID" value="BAB71741.1"/>
    <property type="molecule type" value="Genomic_DNA"/>
</dbReference>
<dbReference type="EMBL" id="AP005441">
    <property type="protein sequence ID" value="BAD05593.1"/>
    <property type="molecule type" value="Genomic_DNA"/>
</dbReference>
<dbReference type="EMBL" id="AP008214">
    <property type="protein sequence ID" value="BAF23086.1"/>
    <property type="molecule type" value="Genomic_DNA"/>
</dbReference>
<dbReference type="EMBL" id="AP014964">
    <property type="protein sequence ID" value="BAT04178.1"/>
    <property type="molecule type" value="Genomic_DNA"/>
</dbReference>
<dbReference type="EMBL" id="AK066092">
    <property type="protein sequence ID" value="BAG89815.1"/>
    <property type="molecule type" value="mRNA"/>
</dbReference>
<dbReference type="EMBL" id="AK103694">
    <property type="protein sequence ID" value="BAG96209.1"/>
    <property type="molecule type" value="mRNA"/>
</dbReference>
<dbReference type="RefSeq" id="NP_001390445.1">
    <property type="nucleotide sequence ID" value="NM_001403516.1"/>
</dbReference>
<dbReference type="RefSeq" id="XP_015650705.1">
    <property type="nucleotide sequence ID" value="XM_015795219.1"/>
</dbReference>
<dbReference type="SMR" id="Q948T6"/>
<dbReference type="FunCoup" id="Q948T6">
    <property type="interactions" value="2008"/>
</dbReference>
<dbReference type="STRING" id="39947.Q948T6"/>
<dbReference type="Allergome" id="1048">
    <property type="allergen name" value="Ory s Glyoxalase I"/>
</dbReference>
<dbReference type="PaxDb" id="39947-Q948T6"/>
<dbReference type="EnsemblPlants" id="Os08t0191700-01">
    <property type="protein sequence ID" value="Os08t0191700-01"/>
    <property type="gene ID" value="Os08g0191700"/>
</dbReference>
<dbReference type="EnsemblPlants" id="Os08t0191700-03">
    <property type="protein sequence ID" value="Os08t0191700-03"/>
    <property type="gene ID" value="Os08g0191700"/>
</dbReference>
<dbReference type="GeneID" id="4344858"/>
<dbReference type="Gramene" id="Os08t0191700-01">
    <property type="protein sequence ID" value="Os08t0191700-01"/>
    <property type="gene ID" value="Os08g0191700"/>
</dbReference>
<dbReference type="Gramene" id="Os08t0191700-03">
    <property type="protein sequence ID" value="Os08t0191700-03"/>
    <property type="gene ID" value="Os08g0191700"/>
</dbReference>
<dbReference type="KEGG" id="dosa:Os08g0191700"/>
<dbReference type="eggNOG" id="KOG2943">
    <property type="taxonomic scope" value="Eukaryota"/>
</dbReference>
<dbReference type="HOGENOM" id="CLU_030607_2_0_1"/>
<dbReference type="InParanoid" id="Q948T6"/>
<dbReference type="OrthoDB" id="16820at2759"/>
<dbReference type="BRENDA" id="4.4.1.5">
    <property type="organism ID" value="8948"/>
</dbReference>
<dbReference type="UniPathway" id="UPA00619">
    <property type="reaction ID" value="UER00675"/>
</dbReference>
<dbReference type="Proteomes" id="UP000000763">
    <property type="component" value="Chromosome 8"/>
</dbReference>
<dbReference type="Proteomes" id="UP000059680">
    <property type="component" value="Chromosome 8"/>
</dbReference>
<dbReference type="ExpressionAtlas" id="Q948T6">
    <property type="expression patterns" value="baseline and differential"/>
</dbReference>
<dbReference type="GO" id="GO:0005737">
    <property type="term" value="C:cytoplasm"/>
    <property type="evidence" value="ECO:0000318"/>
    <property type="project" value="GO_Central"/>
</dbReference>
<dbReference type="GO" id="GO:0019863">
    <property type="term" value="F:IgE binding"/>
    <property type="evidence" value="ECO:0000314"/>
    <property type="project" value="UniProtKB"/>
</dbReference>
<dbReference type="GO" id="GO:0004462">
    <property type="term" value="F:lactoylglutathione lyase activity"/>
    <property type="evidence" value="ECO:0000314"/>
    <property type="project" value="UniProtKB"/>
</dbReference>
<dbReference type="GO" id="GO:0016151">
    <property type="term" value="F:nickel cation binding"/>
    <property type="evidence" value="ECO:0000314"/>
    <property type="project" value="UniProtKB"/>
</dbReference>
<dbReference type="GO" id="GO:0019243">
    <property type="term" value="P:methylglyoxal catabolic process to D-lactate via S-lactoyl-glutathione"/>
    <property type="evidence" value="ECO:0000315"/>
    <property type="project" value="UniProtKB"/>
</dbReference>
<dbReference type="GO" id="GO:0006970">
    <property type="term" value="P:response to osmotic stress"/>
    <property type="evidence" value="ECO:0000315"/>
    <property type="project" value="UniProtKB"/>
</dbReference>
<dbReference type="GO" id="GO:0006979">
    <property type="term" value="P:response to oxidative stress"/>
    <property type="evidence" value="ECO:0000314"/>
    <property type="project" value="UniProtKB"/>
</dbReference>
<dbReference type="GO" id="GO:0009651">
    <property type="term" value="P:response to salt stress"/>
    <property type="evidence" value="ECO:0000314"/>
    <property type="project" value="UniProtKB"/>
</dbReference>
<dbReference type="CDD" id="cd16358">
    <property type="entry name" value="GlxI_Ni"/>
    <property type="match status" value="2"/>
</dbReference>
<dbReference type="FunFam" id="3.10.180.10:FF:000004">
    <property type="entry name" value="Lactoylglutathione lyase"/>
    <property type="match status" value="2"/>
</dbReference>
<dbReference type="Gene3D" id="3.10.180.10">
    <property type="entry name" value="2,3-Dihydroxybiphenyl 1,2-Dioxygenase, domain 1"/>
    <property type="match status" value="2"/>
</dbReference>
<dbReference type="InterPro" id="IPR029068">
    <property type="entry name" value="Glyas_Bleomycin-R_OHBP_Dase"/>
</dbReference>
<dbReference type="InterPro" id="IPR004360">
    <property type="entry name" value="Glyas_Fos-R_dOase_dom"/>
</dbReference>
<dbReference type="InterPro" id="IPR004361">
    <property type="entry name" value="Glyoxalase_1"/>
</dbReference>
<dbReference type="InterPro" id="IPR018146">
    <property type="entry name" value="Glyoxalase_1_CS"/>
</dbReference>
<dbReference type="InterPro" id="IPR037523">
    <property type="entry name" value="VOC"/>
</dbReference>
<dbReference type="NCBIfam" id="TIGR00068">
    <property type="entry name" value="glyox_I"/>
    <property type="match status" value="1"/>
</dbReference>
<dbReference type="PANTHER" id="PTHR46036">
    <property type="entry name" value="LACTOYLGLUTATHIONE LYASE"/>
    <property type="match status" value="1"/>
</dbReference>
<dbReference type="PANTHER" id="PTHR46036:SF2">
    <property type="entry name" value="LACTOYLGLUTATHIONE LYASE GLX1"/>
    <property type="match status" value="1"/>
</dbReference>
<dbReference type="Pfam" id="PF00903">
    <property type="entry name" value="Glyoxalase"/>
    <property type="match status" value="2"/>
</dbReference>
<dbReference type="SUPFAM" id="SSF54593">
    <property type="entry name" value="Glyoxalase/Bleomycin resistance protein/Dihydroxybiphenyl dioxygenase"/>
    <property type="match status" value="2"/>
</dbReference>
<dbReference type="PROSITE" id="PS00934">
    <property type="entry name" value="GLYOXALASE_I_1"/>
    <property type="match status" value="1"/>
</dbReference>
<dbReference type="PROSITE" id="PS51819">
    <property type="entry name" value="VOC"/>
    <property type="match status" value="2"/>
</dbReference>
<feature type="chain" id="PRO_0000168085" description="Lactoylglutathione lyase">
    <location>
        <begin position="1"/>
        <end position="291"/>
    </location>
</feature>
<feature type="domain" description="VOC 1" evidence="2">
    <location>
        <begin position="24"/>
        <end position="149"/>
    </location>
</feature>
<feature type="domain" description="VOC 2" evidence="2">
    <location>
        <begin position="155"/>
        <end position="283"/>
    </location>
</feature>
<feature type="active site" evidence="13">
    <location>
        <position position="96"/>
    </location>
</feature>
<feature type="active site" description="Proton donor/acceptor" evidence="13">
    <location>
        <position position="145"/>
    </location>
</feature>
<feature type="active site" evidence="13">
    <location>
        <position position="158"/>
    </location>
</feature>
<feature type="active site" evidence="13">
    <location>
        <position position="209"/>
    </location>
</feature>
<feature type="binding site" evidence="1">
    <location>
        <position position="31"/>
    </location>
    <ligand>
        <name>substrate</name>
    </ligand>
</feature>
<feature type="binding site" evidence="1">
    <location>
        <position position="82"/>
    </location>
    <ligand>
        <name>substrate</name>
    </ligand>
</feature>
<feature type="binding site" evidence="1">
    <location>
        <position position="96"/>
    </location>
    <ligand>
        <name>substrate</name>
    </ligand>
</feature>
<feature type="binding site" evidence="13">
    <location>
        <position position="145"/>
    </location>
    <ligand>
        <name>Ni(2+)</name>
        <dbReference type="ChEBI" id="CHEBI:49786"/>
    </ligand>
</feature>
<feature type="binding site" evidence="13">
    <location>
        <position position="209"/>
    </location>
    <ligand>
        <name>Ni(2+)</name>
        <dbReference type="ChEBI" id="CHEBI:49786"/>
    </ligand>
</feature>
<feature type="mutagenesis site" description="No effect on the activity." evidence="9">
    <original>E</original>
    <variation>Q</variation>
    <location>
        <position position="78"/>
    </location>
</feature>
<feature type="mutagenesis site" description="Loss of activity." evidence="9">
    <original>E</original>
    <variation>Q</variation>
    <location>
        <position position="145"/>
    </location>
</feature>
<feature type="mutagenesis site" description="Loss of activity." evidence="9">
    <original>E</original>
    <variation>D</variation>
    <location>
        <position position="209"/>
    </location>
</feature>
<feature type="sequence conflict" description="In Ref. 1; BAB71741." evidence="12" ref="1">
    <original>L</original>
    <variation>V</variation>
    <location>
        <position position="25"/>
    </location>
</feature>
<keyword id="KW-0020">Allergen</keyword>
<keyword id="KW-0903">Direct protein sequencing</keyword>
<keyword id="KW-0456">Lyase</keyword>
<keyword id="KW-0479">Metal-binding</keyword>
<keyword id="KW-0533">Nickel</keyword>
<keyword id="KW-0597">Phosphoprotein</keyword>
<keyword id="KW-1185">Reference proteome</keyword>
<keyword id="KW-0677">Repeat</keyword>
<proteinExistence type="evidence at protein level"/>
<protein>
    <recommendedName>
        <fullName>Lactoylglutathione lyase</fullName>
        <ecNumber evidence="3">4.4.1.5</ecNumber>
    </recommendedName>
    <alternativeName>
        <fullName>Aldoketomutase</fullName>
    </alternativeName>
    <alternativeName>
        <fullName>Allergen Glb33</fullName>
    </alternativeName>
    <alternativeName>
        <fullName>Glyoxalase I</fullName>
        <shortName>Glx I</shortName>
    </alternativeName>
    <alternativeName>
        <fullName evidence="12">Glyoxylase I 11</fullName>
        <shortName evidence="11">OsGLYI-11</shortName>
        <shortName evidence="10">OsGLYI11</shortName>
    </alternativeName>
    <alternativeName>
        <fullName>Ketone-aldehyde mutase</fullName>
    </alternativeName>
    <alternativeName>
        <fullName>Methylglyoxalase</fullName>
    </alternativeName>
    <alternativeName>
        <fullName>PP33</fullName>
    </alternativeName>
    <alternativeName>
        <fullName>S-D-lactoylglutathione methylglyoxal lyase</fullName>
    </alternativeName>
    <allergenName>Ory s Glyoxalase I</allergenName>
</protein>
<organism>
    <name type="scientific">Oryza sativa subsp. japonica</name>
    <name type="common">Rice</name>
    <dbReference type="NCBI Taxonomy" id="39947"/>
    <lineage>
        <taxon>Eukaryota</taxon>
        <taxon>Viridiplantae</taxon>
        <taxon>Streptophyta</taxon>
        <taxon>Embryophyta</taxon>
        <taxon>Tracheophyta</taxon>
        <taxon>Spermatophyta</taxon>
        <taxon>Magnoliopsida</taxon>
        <taxon>Liliopsida</taxon>
        <taxon>Poales</taxon>
        <taxon>Poaceae</taxon>
        <taxon>BOP clade</taxon>
        <taxon>Oryzoideae</taxon>
        <taxon>Oryzeae</taxon>
        <taxon>Oryzinae</taxon>
        <taxon>Oryza</taxon>
        <taxon>Oryza sativa</taxon>
    </lineage>
</organism>
<reference key="1">
    <citation type="journal article" date="2001" name="J. Biol. Chem.">
        <title>A 33-kDa allergen from rice (Oryza sativa L. Japonica). cDNA cloning, expression, and identification as a novel glyoxalase I.</title>
        <authorList>
            <person name="Usui Y."/>
            <person name="Nakase M."/>
            <person name="Hotta H."/>
            <person name="Urisu A."/>
            <person name="Aoki N."/>
            <person name="Kitajima K."/>
            <person name="Matsuda T."/>
        </authorList>
    </citation>
    <scope>NUCLEOTIDE SEQUENCE [GENOMIC DNA / MRNA]</scope>
    <scope>PROTEIN SEQUENCE OF 222-236 AND 267-277</scope>
    <scope>CATALYTIC ACTIVITY</scope>
    <scope>BIOPHYSICOCHEMICAL PROPERTIES</scope>
    <scope>TISSUE SPECIFICITY</scope>
    <scope>ALLERGEN</scope>
</reference>
<reference key="2">
    <citation type="submission" date="2006-11" db="EMBL/GenBank/DDBJ databases">
        <title>Molecular cloning of glyoxalase genes in rice seeds.</title>
        <authorList>
            <person name="Yoon U.H."/>
            <person name="Kim Y.H."/>
        </authorList>
    </citation>
    <scope>NUCLEOTIDE SEQUENCE [MRNA]</scope>
    <source>
        <strain>cv. Ilpoombyeo</strain>
        <tissue>Seed</tissue>
    </source>
</reference>
<reference key="3">
    <citation type="submission" date="2009-08" db="EMBL/GenBank/DDBJ databases">
        <title>Structural and expression analysis of germinating seed genes in Oryza sativa L.</title>
        <authorList>
            <person name="Yoon U.H."/>
            <person name="Kim Y.H."/>
        </authorList>
    </citation>
    <scope>NUCLEOTIDE SEQUENCE [MRNA]</scope>
    <source>
        <strain>cv. Ilpoombyeo</strain>
        <tissue>Seed</tissue>
    </source>
</reference>
<reference key="4">
    <citation type="journal article" date="2005" name="Nature">
        <title>The map-based sequence of the rice genome.</title>
        <authorList>
            <consortium name="International rice genome sequencing project (IRGSP)"/>
        </authorList>
    </citation>
    <scope>NUCLEOTIDE SEQUENCE [LARGE SCALE GENOMIC DNA]</scope>
    <source>
        <strain>cv. Nipponbare</strain>
    </source>
</reference>
<reference key="5">
    <citation type="journal article" date="2008" name="Nucleic Acids Res.">
        <title>The rice annotation project database (RAP-DB): 2008 update.</title>
        <authorList>
            <consortium name="The rice annotation project (RAP)"/>
        </authorList>
    </citation>
    <scope>GENOME REANNOTATION</scope>
    <source>
        <strain>cv. Nipponbare</strain>
    </source>
</reference>
<reference key="6">
    <citation type="journal article" date="2013" name="Rice">
        <title>Improvement of the Oryza sativa Nipponbare reference genome using next generation sequence and optical map data.</title>
        <authorList>
            <person name="Kawahara Y."/>
            <person name="de la Bastide M."/>
            <person name="Hamilton J.P."/>
            <person name="Kanamori H."/>
            <person name="McCombie W.R."/>
            <person name="Ouyang S."/>
            <person name="Schwartz D.C."/>
            <person name="Tanaka T."/>
            <person name="Wu J."/>
            <person name="Zhou S."/>
            <person name="Childs K.L."/>
            <person name="Davidson R.M."/>
            <person name="Lin H."/>
            <person name="Quesada-Ocampo L."/>
            <person name="Vaillancourt B."/>
            <person name="Sakai H."/>
            <person name="Lee S.S."/>
            <person name="Kim J."/>
            <person name="Numa H."/>
            <person name="Itoh T."/>
            <person name="Buell C.R."/>
            <person name="Matsumoto T."/>
        </authorList>
    </citation>
    <scope>GENOME REANNOTATION</scope>
    <source>
        <strain>cv. Nipponbare</strain>
    </source>
</reference>
<reference key="7">
    <citation type="journal article" date="2003" name="Science">
        <title>Collection, mapping, and annotation of over 28,000 cDNA clones from japonica rice.</title>
        <authorList>
            <consortium name="The rice full-length cDNA consortium"/>
        </authorList>
    </citation>
    <scope>NUCLEOTIDE SEQUENCE [LARGE SCALE MRNA]</scope>
    <source>
        <strain>cv. Nipponbare</strain>
    </source>
</reference>
<reference key="8">
    <citation type="journal article" date="2004" name="Nucleic Acids Res.">
        <title>Rice proteome database based on two-dimensional polyacrylamide gel electrophoresis: its status in 2003.</title>
        <authorList>
            <person name="Komatsu S."/>
            <person name="Kojima K."/>
            <person name="Suzuki K."/>
            <person name="Ozaki K."/>
            <person name="Higo K."/>
        </authorList>
    </citation>
    <scope>PROTEIN SEQUENCE OF 28-37</scope>
    <scope>TISSUE SPECIFICITY</scope>
    <source>
        <strain>cv. Nipponbare</strain>
        <tissue>Callus</tissue>
        <tissue>Panicle</tissue>
    </source>
</reference>
<reference key="9">
    <citation type="journal article" date="2005" name="Plant Mol. Biol.">
        <title>Identification of phosphoproteins regulated by gibberellin in rice leaf sheath.</title>
        <authorList>
            <person name="Khan M.M.K."/>
            <person name="Jan A."/>
            <person name="Karibe H."/>
            <person name="Komatsu S."/>
        </authorList>
    </citation>
    <scope>IDENTIFICATION BY MASS SPECTROMETRY</scope>
    <scope>INDUCTION</scope>
    <scope>PHOSPHORYLATION</scope>
    <source>
        <strain>cv. Nipponbare</strain>
    </source>
</reference>
<reference key="10">
    <citation type="journal article" date="2011" name="Funct. Integr. Genomics">
        <title>Genome-wide analysis of rice and Arabidopsis identifies two glyoxalase genes that are highly expressed in abiotic stresses.</title>
        <authorList>
            <person name="Mustafiz A."/>
            <person name="Singh A.K."/>
            <person name="Pareek A."/>
            <person name="Sopory S.K."/>
            <person name="Singla-Pareek S.L."/>
        </authorList>
    </citation>
    <scope>INDUCTION</scope>
</reference>
<reference key="11">
    <citation type="journal article" date="2011" name="Regul. Toxicol. Pharmacol.">
        <title>Proteomic analysis of known and candidate rice allergens between non-transgenic and transgenic plants.</title>
        <authorList>
            <person name="Satoh R."/>
            <person name="Nakamura R."/>
            <person name="Komatsu A."/>
            <person name="Oshima M."/>
            <person name="Teshima R."/>
        </authorList>
    </citation>
    <scope>IDENTIFICATION BY MASS SPECTROMETRY</scope>
    <scope>ALLERGEN</scope>
</reference>
<reference key="12">
    <citation type="journal article" date="2013" name="J. Proteome Res.">
        <title>MucoRice-cholera toxin B-subunit, a rice-based oral cholera vaccine, down-regulates the expression of alpha-amylase/trypsin inhibitor-like protein family as major rice allergens.</title>
        <authorList>
            <person name="Kurokawa S."/>
            <person name="Nakamura R."/>
            <person name="Mejima M."/>
            <person name="Kozuka-Hata H."/>
            <person name="Kuroda M."/>
            <person name="Takeyama N."/>
            <person name="Oyama M."/>
            <person name="Satoh S."/>
            <person name="Kiyono H."/>
            <person name="Masumura T."/>
            <person name="Teshima R."/>
            <person name="Yuki Y."/>
        </authorList>
    </citation>
    <scope>IDENTIFICATION BY MASS SPECTROMETRY</scope>
    <scope>ALLERGEN</scope>
</reference>
<reference key="13">
    <citation type="journal article" date="2014" name="Plant J.">
        <title>A unique Ni2+ -dependent and methylglyoxal-inducible rice glyoxalase I possesses a single active site and functions in abiotic stress response.</title>
        <authorList>
            <person name="Mustafiz A."/>
            <person name="Ghosh A."/>
            <person name="Tripathi A.K."/>
            <person name="Kaur C."/>
            <person name="Ganguly A.K."/>
            <person name="Bhavesh N.S."/>
            <person name="Tripathi J.K."/>
            <person name="Pareek A."/>
            <person name="Sopory S.K."/>
            <person name="Singla-Pareek S.L."/>
        </authorList>
    </citation>
    <scope>FUNCTION</scope>
    <scope>ACTIVE SITE</scope>
    <scope>COFACTOR</scope>
    <scope>BIOPHYSICOCHEMICAL PROPERTIES</scope>
    <scope>INDUCTION</scope>
    <scope>MUTAGENESIS OF GLU-78; GLU-145 AND GLU-209</scope>
</reference>
<accession>Q948T6</accession>
<accession>Q0J7H9</accession>
<accession>Q9ZWJ2</accession>